<proteinExistence type="evidence at protein level"/>
<protein>
    <recommendedName>
        <fullName>Corticosteroid-binding globulin</fullName>
        <shortName>CBG</shortName>
    </recommendedName>
    <alternativeName>
        <fullName>Serpin A6</fullName>
    </alternativeName>
    <alternativeName>
        <fullName>Transcortin</fullName>
    </alternativeName>
</protein>
<reference key="1">
    <citation type="journal article" date="1989" name="Mol. Endocrinol.">
        <title>Rat corticosteroid binding globulin: primary structure and messenger ribonucleic acid levels in the liver under different physiological conditions.</title>
        <authorList>
            <person name="Smith C.L."/>
            <person name="Hammond G.L."/>
        </authorList>
    </citation>
    <scope>NUCLEOTIDE SEQUENCE [MRNA]</scope>
    <scope>TISSUE SPECIFICITY</scope>
    <source>
        <tissue>Liver</tissue>
    </source>
</reference>
<reference key="2">
    <citation type="submission" date="2005-08" db="EMBL/GenBank/DDBJ databases">
        <authorList>
            <person name="Mural R.J."/>
            <person name="Adams M.D."/>
            <person name="Myers E.W."/>
            <person name="Smith H.O."/>
            <person name="Venter J.C."/>
        </authorList>
    </citation>
    <scope>NUCLEOTIDE SEQUENCE [LARGE SCALE GENOMIC DNA]</scope>
    <source>
        <strain>Brown Norway</strain>
    </source>
</reference>
<reference key="3">
    <citation type="journal article" date="2004" name="Genome Res.">
        <title>The status, quality, and expansion of the NIH full-length cDNA project: the Mammalian Gene Collection (MGC).</title>
        <authorList>
            <consortium name="The MGC Project Team"/>
        </authorList>
    </citation>
    <scope>NUCLEOTIDE SEQUENCE [LARGE SCALE MRNA]</scope>
    <source>
        <tissue>Liver</tissue>
    </source>
</reference>
<reference key="4">
    <citation type="journal article" date="1988" name="J. Steroid Biochem.">
        <title>Comparative structural analyses of corticosteroid binding globulin.</title>
        <authorList>
            <person name="Kato E.A."/>
            <person name="Hsu B.R.-S."/>
            <person name="Kuhn R.W."/>
        </authorList>
    </citation>
    <scope>PROTEIN SEQUENCE OF 23-60</scope>
</reference>
<reference key="5">
    <citation type="journal article" date="2007" name="J. Biol. Chem.">
        <title>Corticosteroid-binding globulin, a structural basis for steroid transport and proteinase-triggered release.</title>
        <authorList>
            <person name="Klieber M.A."/>
            <person name="Underhill C."/>
            <person name="Hammond G.L."/>
            <person name="Muller Y.A."/>
        </authorList>
    </citation>
    <scope>X-RAY CRYSTALLOGRAPHY (1.9 ANGSTROMS) OF 27-396 IN COMPLEX WITH CORTISOL</scope>
    <scope>FUNCTION</scope>
    <scope>MUTAGENESIS OF ARG-32; PRO-36; GLN-246; PHE-256 AND ASP-278</scope>
</reference>
<name>CBG_RAT</name>
<organism>
    <name type="scientific">Rattus norvegicus</name>
    <name type="common">Rat</name>
    <dbReference type="NCBI Taxonomy" id="10116"/>
    <lineage>
        <taxon>Eukaryota</taxon>
        <taxon>Metazoa</taxon>
        <taxon>Chordata</taxon>
        <taxon>Craniata</taxon>
        <taxon>Vertebrata</taxon>
        <taxon>Euteleostomi</taxon>
        <taxon>Mammalia</taxon>
        <taxon>Eutheria</taxon>
        <taxon>Euarchontoglires</taxon>
        <taxon>Glires</taxon>
        <taxon>Rodentia</taxon>
        <taxon>Myomorpha</taxon>
        <taxon>Muroidea</taxon>
        <taxon>Muridae</taxon>
        <taxon>Murinae</taxon>
        <taxon>Rattus</taxon>
    </lineage>
</organism>
<keyword id="KW-0002">3D-structure</keyword>
<keyword id="KW-0903">Direct protein sequencing</keyword>
<keyword id="KW-0325">Glycoprotein</keyword>
<keyword id="KW-0446">Lipid-binding</keyword>
<keyword id="KW-1185">Reference proteome</keyword>
<keyword id="KW-0964">Secreted</keyword>
<keyword id="KW-0732">Signal</keyword>
<keyword id="KW-0754">Steroid-binding</keyword>
<keyword id="KW-0813">Transport</keyword>
<dbReference type="EMBL" id="CH473982">
    <property type="protein sequence ID" value="EDL81783.1"/>
    <property type="molecule type" value="Genomic_DNA"/>
</dbReference>
<dbReference type="EMBL" id="BC088300">
    <property type="protein sequence ID" value="AAH88300.1"/>
    <property type="molecule type" value="mRNA"/>
</dbReference>
<dbReference type="PIR" id="A40066">
    <property type="entry name" value="A40066"/>
</dbReference>
<dbReference type="RefSeq" id="NP_001009663.1">
    <property type="nucleotide sequence ID" value="NM_001009663.1"/>
</dbReference>
<dbReference type="PDB" id="2V95">
    <property type="method" value="X-ray"/>
    <property type="resolution" value="1.93 A"/>
    <property type="chains" value="A=27-396"/>
</dbReference>
<dbReference type="PDBsum" id="2V95"/>
<dbReference type="SMR" id="P31211"/>
<dbReference type="FunCoup" id="P31211">
    <property type="interactions" value="68"/>
</dbReference>
<dbReference type="STRING" id="10116.ENSRNOP00000012500"/>
<dbReference type="MEROPS" id="I04.954"/>
<dbReference type="GlyCosmos" id="P31211">
    <property type="glycosylation" value="5 sites, No reported glycans"/>
</dbReference>
<dbReference type="GlyGen" id="P31211">
    <property type="glycosylation" value="5 sites"/>
</dbReference>
<dbReference type="PhosphoSitePlus" id="P31211"/>
<dbReference type="PaxDb" id="10116-ENSRNOP00000012500"/>
<dbReference type="Ensembl" id="ENSRNOT00000012500.8">
    <property type="protein sequence ID" value="ENSRNOP00000012500.4"/>
    <property type="gene ID" value="ENSRNOG00000009438.8"/>
</dbReference>
<dbReference type="GeneID" id="299270"/>
<dbReference type="KEGG" id="rno:299270"/>
<dbReference type="UCSC" id="RGD:1595901">
    <property type="organism name" value="rat"/>
</dbReference>
<dbReference type="AGR" id="RGD:1595901"/>
<dbReference type="CTD" id="866"/>
<dbReference type="RGD" id="1595901">
    <property type="gene designation" value="Serpina6"/>
</dbReference>
<dbReference type="eggNOG" id="KOG2392">
    <property type="taxonomic scope" value="Eukaryota"/>
</dbReference>
<dbReference type="GeneTree" id="ENSGT00940000161611"/>
<dbReference type="HOGENOM" id="CLU_023330_2_1_1"/>
<dbReference type="InParanoid" id="P31211"/>
<dbReference type="OMA" id="HDSELPC"/>
<dbReference type="OrthoDB" id="44824at9989"/>
<dbReference type="PhylomeDB" id="P31211"/>
<dbReference type="TreeFam" id="TF343201"/>
<dbReference type="Reactome" id="R-RNO-194002">
    <property type="pathway name" value="Glucocorticoid biosynthesis"/>
</dbReference>
<dbReference type="Reactome" id="R-RNO-9757110">
    <property type="pathway name" value="Prednisone ADME"/>
</dbReference>
<dbReference type="EvolutionaryTrace" id="P31211"/>
<dbReference type="PRO" id="PR:P31211"/>
<dbReference type="Proteomes" id="UP000002494">
    <property type="component" value="Chromosome 6"/>
</dbReference>
<dbReference type="Proteomes" id="UP000234681">
    <property type="component" value="Chromosome 6"/>
</dbReference>
<dbReference type="Bgee" id="ENSRNOG00000009438">
    <property type="expression patterns" value="Expressed in liver and 11 other cell types or tissues"/>
</dbReference>
<dbReference type="GO" id="GO:0005615">
    <property type="term" value="C:extracellular space"/>
    <property type="evidence" value="ECO:0000266"/>
    <property type="project" value="RGD"/>
</dbReference>
<dbReference type="GO" id="GO:0004867">
    <property type="term" value="F:serine-type endopeptidase inhibitor activity"/>
    <property type="evidence" value="ECO:0000318"/>
    <property type="project" value="GO_Central"/>
</dbReference>
<dbReference type="GO" id="GO:0005496">
    <property type="term" value="F:steroid binding"/>
    <property type="evidence" value="ECO:0000250"/>
    <property type="project" value="UniProtKB"/>
</dbReference>
<dbReference type="GO" id="GO:0008211">
    <property type="term" value="P:glucocorticoid metabolic process"/>
    <property type="evidence" value="ECO:0000266"/>
    <property type="project" value="RGD"/>
</dbReference>
<dbReference type="CDD" id="cd19554">
    <property type="entry name" value="serpinA6_CBG"/>
    <property type="match status" value="1"/>
</dbReference>
<dbReference type="FunFam" id="3.30.497.10:FF:000001">
    <property type="entry name" value="Serine protease inhibitor"/>
    <property type="match status" value="1"/>
</dbReference>
<dbReference type="FunFam" id="2.30.39.10:FF:000002">
    <property type="entry name" value="Serpin family D member 1"/>
    <property type="match status" value="1"/>
</dbReference>
<dbReference type="Gene3D" id="2.30.39.10">
    <property type="entry name" value="Alpha-1-antitrypsin, domain 1"/>
    <property type="match status" value="1"/>
</dbReference>
<dbReference type="Gene3D" id="3.30.497.10">
    <property type="entry name" value="Antithrombin, subunit I, domain 2"/>
    <property type="match status" value="1"/>
</dbReference>
<dbReference type="InterPro" id="IPR023795">
    <property type="entry name" value="Serpin_CS"/>
</dbReference>
<dbReference type="InterPro" id="IPR023796">
    <property type="entry name" value="Serpin_dom"/>
</dbReference>
<dbReference type="InterPro" id="IPR000215">
    <property type="entry name" value="Serpin_fam"/>
</dbReference>
<dbReference type="InterPro" id="IPR036186">
    <property type="entry name" value="Serpin_sf"/>
</dbReference>
<dbReference type="InterPro" id="IPR042178">
    <property type="entry name" value="Serpin_sf_1"/>
</dbReference>
<dbReference type="InterPro" id="IPR042185">
    <property type="entry name" value="Serpin_sf_2"/>
</dbReference>
<dbReference type="PANTHER" id="PTHR11461:SF34">
    <property type="entry name" value="CORTICOSTEROID-BINDING GLOBULIN"/>
    <property type="match status" value="1"/>
</dbReference>
<dbReference type="PANTHER" id="PTHR11461">
    <property type="entry name" value="SERINE PROTEASE INHIBITOR, SERPIN"/>
    <property type="match status" value="1"/>
</dbReference>
<dbReference type="Pfam" id="PF00079">
    <property type="entry name" value="Serpin"/>
    <property type="match status" value="1"/>
</dbReference>
<dbReference type="PRINTS" id="PR00780">
    <property type="entry name" value="LEUSERPINII"/>
</dbReference>
<dbReference type="SMART" id="SM00093">
    <property type="entry name" value="SERPIN"/>
    <property type="match status" value="1"/>
</dbReference>
<dbReference type="SUPFAM" id="SSF56574">
    <property type="entry name" value="Serpins"/>
    <property type="match status" value="1"/>
</dbReference>
<dbReference type="PROSITE" id="PS00284">
    <property type="entry name" value="SERPIN"/>
    <property type="match status" value="1"/>
</dbReference>
<sequence>MSLALYTCLLWLCTSGLWTAQASTNESSNSHRGLAPTNVDFAFNLYQRLVALNPDKNTLISPVSISMALAMVSLGSAQTQSLQSLGFNLTETSEAEIHQSFQYLNYLLKQSDTGLEMNMGNAMFLLQKLKLKDSFLADVKQYYESEALAIDFEDWTKASQQINQHVKDKTQGKIEHVFSDLDSPASFILVNYIFLRGIWELPFSPENTREEDFYVNETSTVKVPMMVQSGSIGYFRDSVFPCQLIQMDYVGNGTAFFILPDQGQMDTVIAALSRDTIDRWGKLMTPRQVNLYIPKFSISDTYDLKDMLEDLNIKDLLTNQSDFSGNTKDVPLTLTMVHKAMLQLDEGNVLPNSTNGAPLHLRSEPLDIKFNKPFILLLFDKFTWSSLMMSQVVNPA</sequence>
<accession>P31211</accession>
<accession>Q5M822</accession>
<gene>
    <name type="primary">Serpina6</name>
    <name type="synonym">Cbg</name>
</gene>
<evidence type="ECO:0000250" key="1"/>
<evidence type="ECO:0000255" key="2"/>
<evidence type="ECO:0000269" key="3">
    <source>
    </source>
</evidence>
<evidence type="ECO:0000269" key="4">
    <source>
    </source>
</evidence>
<evidence type="ECO:0000269" key="5">
    <source>
    </source>
</evidence>
<evidence type="ECO:0000305" key="6"/>
<evidence type="ECO:0007829" key="7">
    <source>
        <dbReference type="PDB" id="2V95"/>
    </source>
</evidence>
<comment type="function">
    <text evidence="3">Major transport protein for glucocorticoids and progestins in the blood of almost all vertebrate species.</text>
</comment>
<comment type="subcellular location">
    <subcellularLocation>
        <location>Secreted</location>
    </subcellularLocation>
</comment>
<comment type="tissue specificity">
    <text evidence="4">Expressed by the liver; secreted in plasma.</text>
</comment>
<comment type="domain">
    <text evidence="1">Proteolytic cleavage leads to an important conformation change. This reduces the affinity for steroids (By similarity).</text>
</comment>
<comment type="similarity">
    <text evidence="6">Belongs to the serpin family.</text>
</comment>
<feature type="signal peptide" evidence="5">
    <location>
        <begin position="1"/>
        <end position="22"/>
    </location>
</feature>
<feature type="chain" id="PRO_0000032432" description="Corticosteroid-binding globulin">
    <location>
        <begin position="23"/>
        <end position="396"/>
    </location>
</feature>
<feature type="binding site" evidence="3">
    <location>
        <position position="246"/>
    </location>
    <ligand>
        <name>cortisol</name>
        <dbReference type="ChEBI" id="CHEBI:17650"/>
    </ligand>
</feature>
<feature type="binding site" evidence="3">
    <location>
        <position position="278"/>
    </location>
    <ligand>
        <name>cortisol</name>
        <dbReference type="ChEBI" id="CHEBI:17650"/>
    </ligand>
</feature>
<feature type="binding site" evidence="3">
    <location>
        <position position="384"/>
    </location>
    <ligand>
        <name>cortisol</name>
        <dbReference type="ChEBI" id="CHEBI:17650"/>
    </ligand>
</feature>
<feature type="site" description="Conserved cysteine within steroid binding domain">
    <location>
        <position position="242"/>
    </location>
</feature>
<feature type="glycosylation site" description="N-linked (GlcNAc...) asparagine" evidence="2">
    <location>
        <position position="88"/>
    </location>
</feature>
<feature type="glycosylation site" description="N-linked (GlcNAc...) asparagine" evidence="2">
    <location>
        <position position="216"/>
    </location>
</feature>
<feature type="glycosylation site" description="N-linked (GlcNAc...) asparagine" evidence="2">
    <location>
        <position position="252"/>
    </location>
</feature>
<feature type="glycosylation site" description="N-linked (GlcNAc...) asparagine" evidence="2">
    <location>
        <position position="319"/>
    </location>
</feature>
<feature type="glycosylation site" description="N-linked (GlcNAc...) asparagine" evidence="2">
    <location>
        <position position="352"/>
    </location>
</feature>
<feature type="mutagenesis site" description="Loss of corticosteroid binding." evidence="3">
    <original>R</original>
    <variation>A</variation>
    <location>
        <position position="32"/>
    </location>
</feature>
<feature type="mutagenesis site" description="Increased affinity for corticosteroids." evidence="3">
    <original>P</original>
    <variation>A</variation>
    <location>
        <position position="36"/>
    </location>
</feature>
<feature type="mutagenesis site" description="Loss of corticosteroid binding." evidence="3">
    <original>Q</original>
    <variation>A</variation>
    <location>
        <position position="246"/>
    </location>
</feature>
<feature type="mutagenesis site" description="Loss of corticosteroid binding." evidence="3">
    <original>F</original>
    <variation>A</variation>
    <location>
        <position position="256"/>
    </location>
</feature>
<feature type="mutagenesis site" description="Loss of corticosteroid binding." evidence="3">
    <original>D</original>
    <variation>A</variation>
    <location>
        <position position="278"/>
    </location>
</feature>
<feature type="sequence conflict" description="In Ref. 4; AA sequence." evidence="6" ref="4">
    <original>QR</original>
    <variation>EC</variation>
    <location>
        <begin position="47"/>
        <end position="48"/>
    </location>
</feature>
<feature type="sequence conflict" description="In Ref. 4; AA sequence." evidence="6" ref="4">
    <original>P</original>
    <variation>C</variation>
    <location>
        <position position="54"/>
    </location>
</feature>
<feature type="sequence conflict" description="In Ref. 1." evidence="6" ref="1">
    <original>NQ</original>
    <variation>TR</variation>
    <location>
        <begin position="163"/>
        <end position="164"/>
    </location>
</feature>
<feature type="sequence conflict" description="In Ref. 1." evidence="6" ref="1">
    <original>I</original>
    <variation>M</variation>
    <location>
        <position position="298"/>
    </location>
</feature>
<feature type="sequence conflict" description="In Ref. 1." evidence="6" ref="1">
    <original>M</original>
    <variation>V</variation>
    <location>
        <position position="307"/>
    </location>
</feature>
<feature type="helix" evidence="7">
    <location>
        <begin position="30"/>
        <end position="32"/>
    </location>
</feature>
<feature type="helix" evidence="7">
    <location>
        <begin position="35"/>
        <end position="52"/>
    </location>
</feature>
<feature type="strand" evidence="7">
    <location>
        <begin position="58"/>
        <end position="60"/>
    </location>
</feature>
<feature type="helix" evidence="7">
    <location>
        <begin position="62"/>
        <end position="72"/>
    </location>
</feature>
<feature type="turn" evidence="7">
    <location>
        <begin position="73"/>
        <end position="75"/>
    </location>
</feature>
<feature type="helix" evidence="7">
    <location>
        <begin position="80"/>
        <end position="85"/>
    </location>
</feature>
<feature type="turn" evidence="7">
    <location>
        <begin position="89"/>
        <end position="91"/>
    </location>
</feature>
<feature type="helix" evidence="7">
    <location>
        <begin position="94"/>
        <end position="108"/>
    </location>
</feature>
<feature type="helix" evidence="7">
    <location>
        <begin position="111"/>
        <end position="113"/>
    </location>
</feature>
<feature type="strand" evidence="7">
    <location>
        <begin position="114"/>
        <end position="125"/>
    </location>
</feature>
<feature type="helix" evidence="7">
    <location>
        <begin position="133"/>
        <end position="142"/>
    </location>
</feature>
<feature type="strand" evidence="7">
    <location>
        <begin position="146"/>
        <end position="149"/>
    </location>
</feature>
<feature type="helix" evidence="7">
    <location>
        <begin position="155"/>
        <end position="169"/>
    </location>
</feature>
<feature type="turn" evidence="7">
    <location>
        <begin position="170"/>
        <end position="172"/>
    </location>
</feature>
<feature type="strand" evidence="7">
    <location>
        <begin position="186"/>
        <end position="197"/>
    </location>
</feature>
<feature type="strand" evidence="7">
    <location>
        <begin position="199"/>
        <end position="201"/>
    </location>
</feature>
<feature type="helix" evidence="7">
    <location>
        <begin position="205"/>
        <end position="207"/>
    </location>
</feature>
<feature type="strand" evidence="7">
    <location>
        <begin position="209"/>
        <end position="214"/>
    </location>
</feature>
<feature type="strand" evidence="7">
    <location>
        <begin position="216"/>
        <end position="218"/>
    </location>
</feature>
<feature type="strand" evidence="7">
    <location>
        <begin position="220"/>
        <end position="237"/>
    </location>
</feature>
<feature type="turn" evidence="7">
    <location>
        <begin position="238"/>
        <end position="241"/>
    </location>
</feature>
<feature type="strand" evidence="7">
    <location>
        <begin position="242"/>
        <end position="260"/>
    </location>
</feature>
<feature type="helix" evidence="7">
    <location>
        <begin position="265"/>
        <end position="271"/>
    </location>
</feature>
<feature type="helix" evidence="7">
    <location>
        <begin position="274"/>
        <end position="283"/>
    </location>
</feature>
<feature type="strand" evidence="7">
    <location>
        <begin position="285"/>
        <end position="294"/>
    </location>
</feature>
<feature type="strand" evidence="7">
    <location>
        <begin position="296"/>
        <end position="303"/>
    </location>
</feature>
<feature type="helix" evidence="7">
    <location>
        <begin position="304"/>
        <end position="306"/>
    </location>
</feature>
<feature type="helix" evidence="7">
    <location>
        <begin position="313"/>
        <end position="316"/>
    </location>
</feature>
<feature type="strand" evidence="7">
    <location>
        <begin position="334"/>
        <end position="345"/>
    </location>
</feature>
<feature type="strand" evidence="7">
    <location>
        <begin position="366"/>
        <end position="369"/>
    </location>
</feature>
<feature type="strand" evidence="7">
    <location>
        <begin position="374"/>
        <end position="380"/>
    </location>
</feature>
<feature type="turn" evidence="7">
    <location>
        <begin position="381"/>
        <end position="383"/>
    </location>
</feature>
<feature type="strand" evidence="7">
    <location>
        <begin position="386"/>
        <end position="393"/>
    </location>
</feature>